<accession>C4ZF71</accession>
<evidence type="ECO:0000255" key="1">
    <source>
        <dbReference type="HAMAP-Rule" id="MF_00494"/>
    </source>
</evidence>
<reference key="1">
    <citation type="journal article" date="2009" name="Proc. Natl. Acad. Sci. U.S.A.">
        <title>Characterizing a model human gut microbiota composed of members of its two dominant bacterial phyla.</title>
        <authorList>
            <person name="Mahowald M.A."/>
            <person name="Rey F.E."/>
            <person name="Seedorf H."/>
            <person name="Turnbaugh P.J."/>
            <person name="Fulton R.S."/>
            <person name="Wollam A."/>
            <person name="Shah N."/>
            <person name="Wang C."/>
            <person name="Magrini V."/>
            <person name="Wilson R.K."/>
            <person name="Cantarel B.L."/>
            <person name="Coutinho P.M."/>
            <person name="Henrissat B."/>
            <person name="Crock L.W."/>
            <person name="Russell A."/>
            <person name="Verberkmoes N.C."/>
            <person name="Hettich R.L."/>
            <person name="Gordon J.I."/>
        </authorList>
    </citation>
    <scope>NUCLEOTIDE SEQUENCE [LARGE SCALE GENOMIC DNA]</scope>
    <source>
        <strain>ATCC 33656 / DSM 3377 / JCM 17463 / KCTC 5835 / LMG 30912 / VPI 0990</strain>
    </source>
</reference>
<proteinExistence type="inferred from homology"/>
<name>TAL_AGARV</name>
<comment type="function">
    <text evidence="1">Transaldolase is important for the balance of metabolites in the pentose-phosphate pathway.</text>
</comment>
<comment type="catalytic activity">
    <reaction evidence="1">
        <text>D-sedoheptulose 7-phosphate + D-glyceraldehyde 3-phosphate = D-erythrose 4-phosphate + beta-D-fructose 6-phosphate</text>
        <dbReference type="Rhea" id="RHEA:17053"/>
        <dbReference type="ChEBI" id="CHEBI:16897"/>
        <dbReference type="ChEBI" id="CHEBI:57483"/>
        <dbReference type="ChEBI" id="CHEBI:57634"/>
        <dbReference type="ChEBI" id="CHEBI:59776"/>
        <dbReference type="EC" id="2.2.1.2"/>
    </reaction>
</comment>
<comment type="pathway">
    <text evidence="1">Carbohydrate degradation; pentose phosphate pathway; D-glyceraldehyde 3-phosphate and beta-D-fructose 6-phosphate from D-ribose 5-phosphate and D-xylulose 5-phosphate (non-oxidative stage): step 2/3.</text>
</comment>
<comment type="subcellular location">
    <subcellularLocation>
        <location evidence="1">Cytoplasm</location>
    </subcellularLocation>
</comment>
<comment type="similarity">
    <text evidence="1">Belongs to the transaldolase family. Type 3B subfamily.</text>
</comment>
<organism>
    <name type="scientific">Agathobacter rectalis (strain ATCC 33656 / DSM 3377 / JCM 17463 / KCTC 5835 / VPI 0990)</name>
    <name type="common">Eubacterium rectale</name>
    <dbReference type="NCBI Taxonomy" id="515619"/>
    <lineage>
        <taxon>Bacteria</taxon>
        <taxon>Bacillati</taxon>
        <taxon>Bacillota</taxon>
        <taxon>Clostridia</taxon>
        <taxon>Lachnospirales</taxon>
        <taxon>Lachnospiraceae</taxon>
        <taxon>Agathobacter</taxon>
    </lineage>
</organism>
<feature type="chain" id="PRO_1000206470" description="Probable transaldolase">
    <location>
        <begin position="1"/>
        <end position="217"/>
    </location>
</feature>
<feature type="active site" description="Schiff-base intermediate with substrate" evidence="1">
    <location>
        <position position="85"/>
    </location>
</feature>
<keyword id="KW-0963">Cytoplasm</keyword>
<keyword id="KW-0570">Pentose shunt</keyword>
<keyword id="KW-0704">Schiff base</keyword>
<keyword id="KW-0808">Transferase</keyword>
<gene>
    <name evidence="1" type="primary">tal</name>
    <name type="ordered locus">EUBREC_2461</name>
</gene>
<sequence length="217" mass="23429">MKFFVDTANVEDIKKANDMGVICGVTTNPSLIAKEGRDFNEVIKEITSIVDGPISGEVKATTVDAEGMIKEGREIAAIHPNMVVKIPMTVEGLKAVKVLSSEGIKTNVTLIFSANQAILAANAGATYVSPFLGRLDDISQPGIELIRQISEIFDIYGYDTEIIAASIRNPIHVTDCALAGADIATIPYKVIEQMTKHPLTDQGIEKFQADYRAVFGD</sequence>
<dbReference type="EC" id="2.2.1.2" evidence="1"/>
<dbReference type="EMBL" id="CP001107">
    <property type="protein sequence ID" value="ACR76192.1"/>
    <property type="molecule type" value="Genomic_DNA"/>
</dbReference>
<dbReference type="SMR" id="C4ZF71"/>
<dbReference type="STRING" id="515619.EUBREC_2461"/>
<dbReference type="PaxDb" id="515619-EUBREC_2461"/>
<dbReference type="KEGG" id="ere:EUBREC_2461"/>
<dbReference type="HOGENOM" id="CLU_079764_0_0_9"/>
<dbReference type="UniPathway" id="UPA00115">
    <property type="reaction ID" value="UER00414"/>
</dbReference>
<dbReference type="Proteomes" id="UP000001477">
    <property type="component" value="Chromosome"/>
</dbReference>
<dbReference type="GO" id="GO:0005737">
    <property type="term" value="C:cytoplasm"/>
    <property type="evidence" value="ECO:0007669"/>
    <property type="project" value="UniProtKB-SubCell"/>
</dbReference>
<dbReference type="GO" id="GO:0016832">
    <property type="term" value="F:aldehyde-lyase activity"/>
    <property type="evidence" value="ECO:0007669"/>
    <property type="project" value="InterPro"/>
</dbReference>
<dbReference type="GO" id="GO:0004801">
    <property type="term" value="F:transaldolase activity"/>
    <property type="evidence" value="ECO:0007669"/>
    <property type="project" value="UniProtKB-UniRule"/>
</dbReference>
<dbReference type="GO" id="GO:0005975">
    <property type="term" value="P:carbohydrate metabolic process"/>
    <property type="evidence" value="ECO:0007669"/>
    <property type="project" value="InterPro"/>
</dbReference>
<dbReference type="GO" id="GO:0006098">
    <property type="term" value="P:pentose-phosphate shunt"/>
    <property type="evidence" value="ECO:0007669"/>
    <property type="project" value="UniProtKB-UniRule"/>
</dbReference>
<dbReference type="CDD" id="cd00956">
    <property type="entry name" value="Transaldolase_FSA"/>
    <property type="match status" value="1"/>
</dbReference>
<dbReference type="FunFam" id="3.20.20.70:FF:000018">
    <property type="entry name" value="Probable transaldolase"/>
    <property type="match status" value="1"/>
</dbReference>
<dbReference type="Gene3D" id="3.20.20.70">
    <property type="entry name" value="Aldolase class I"/>
    <property type="match status" value="1"/>
</dbReference>
<dbReference type="HAMAP" id="MF_00494">
    <property type="entry name" value="Transaldolase_3b"/>
    <property type="match status" value="1"/>
</dbReference>
<dbReference type="InterPro" id="IPR013785">
    <property type="entry name" value="Aldolase_TIM"/>
</dbReference>
<dbReference type="InterPro" id="IPR001585">
    <property type="entry name" value="TAL/FSA"/>
</dbReference>
<dbReference type="InterPro" id="IPR022999">
    <property type="entry name" value="Transaldolase_3B"/>
</dbReference>
<dbReference type="InterPro" id="IPR004731">
    <property type="entry name" value="Transaldolase_3B/F6P_aldolase"/>
</dbReference>
<dbReference type="InterPro" id="IPR018225">
    <property type="entry name" value="Transaldolase_AS"/>
</dbReference>
<dbReference type="InterPro" id="IPR033919">
    <property type="entry name" value="TSA/FSA_arc/bac"/>
</dbReference>
<dbReference type="NCBIfam" id="TIGR00875">
    <property type="entry name" value="fsa_talC_mipB"/>
    <property type="match status" value="1"/>
</dbReference>
<dbReference type="PANTHER" id="PTHR10683">
    <property type="entry name" value="TRANSALDOLASE"/>
    <property type="match status" value="1"/>
</dbReference>
<dbReference type="PANTHER" id="PTHR10683:SF36">
    <property type="entry name" value="TRANSALDOLASE"/>
    <property type="match status" value="1"/>
</dbReference>
<dbReference type="Pfam" id="PF00923">
    <property type="entry name" value="TAL_FSA"/>
    <property type="match status" value="1"/>
</dbReference>
<dbReference type="SUPFAM" id="SSF51569">
    <property type="entry name" value="Aldolase"/>
    <property type="match status" value="1"/>
</dbReference>
<dbReference type="PROSITE" id="PS01054">
    <property type="entry name" value="TRANSALDOLASE_1"/>
    <property type="match status" value="1"/>
</dbReference>
<dbReference type="PROSITE" id="PS00958">
    <property type="entry name" value="TRANSALDOLASE_2"/>
    <property type="match status" value="1"/>
</dbReference>
<protein>
    <recommendedName>
        <fullName evidence="1">Probable transaldolase</fullName>
        <ecNumber evidence="1">2.2.1.2</ecNumber>
    </recommendedName>
</protein>